<name>Y616_STAA9</name>
<comment type="similarity">
    <text evidence="1">Belongs to the UPF0741 family.</text>
</comment>
<keyword id="KW-0175">Coiled coil</keyword>
<protein>
    <recommendedName>
        <fullName evidence="1">UPF0741 protein SaurJH9_0616</fullName>
    </recommendedName>
</protein>
<feature type="chain" id="PRO_0000372748" description="UPF0741 protein SaurJH9_0616">
    <location>
        <begin position="1"/>
        <end position="113"/>
    </location>
</feature>
<feature type="region of interest" description="Disordered" evidence="2">
    <location>
        <begin position="68"/>
        <end position="113"/>
    </location>
</feature>
<feature type="coiled-coil region" evidence="1">
    <location>
        <begin position="78"/>
        <end position="113"/>
    </location>
</feature>
<feature type="compositionally biased region" description="Basic residues" evidence="2">
    <location>
        <begin position="85"/>
        <end position="94"/>
    </location>
</feature>
<feature type="compositionally biased region" description="Basic and acidic residues" evidence="2">
    <location>
        <begin position="95"/>
        <end position="113"/>
    </location>
</feature>
<evidence type="ECO:0000255" key="1">
    <source>
        <dbReference type="HAMAP-Rule" id="MF_01863"/>
    </source>
</evidence>
<evidence type="ECO:0000256" key="2">
    <source>
        <dbReference type="SAM" id="MobiDB-lite"/>
    </source>
</evidence>
<accession>A5IQE7</accession>
<proteinExistence type="inferred from homology"/>
<organism>
    <name type="scientific">Staphylococcus aureus (strain JH9)</name>
    <dbReference type="NCBI Taxonomy" id="359786"/>
    <lineage>
        <taxon>Bacteria</taxon>
        <taxon>Bacillati</taxon>
        <taxon>Bacillota</taxon>
        <taxon>Bacilli</taxon>
        <taxon>Bacillales</taxon>
        <taxon>Staphylococcaceae</taxon>
        <taxon>Staphylococcus</taxon>
    </lineage>
</organism>
<sequence>MKNTFLICDECQAVNIRTLQKKLEKLDPDAEIVIGCQSYCGPGRRKTFTFVNNRPLAALTEEELIEKVSQQLKKPRDPEEEERLRKRHEERKRRKEEQDRKLKEKLEKRKAQQ</sequence>
<reference key="1">
    <citation type="submission" date="2007-05" db="EMBL/GenBank/DDBJ databases">
        <title>Complete sequence of chromosome of Staphylococcus aureus subsp. aureus JH9.</title>
        <authorList>
            <consortium name="US DOE Joint Genome Institute"/>
            <person name="Copeland A."/>
            <person name="Lucas S."/>
            <person name="Lapidus A."/>
            <person name="Barry K."/>
            <person name="Detter J.C."/>
            <person name="Glavina del Rio T."/>
            <person name="Hammon N."/>
            <person name="Israni S."/>
            <person name="Pitluck S."/>
            <person name="Chain P."/>
            <person name="Malfatti S."/>
            <person name="Shin M."/>
            <person name="Vergez L."/>
            <person name="Schmutz J."/>
            <person name="Larimer F."/>
            <person name="Land M."/>
            <person name="Hauser L."/>
            <person name="Kyrpides N."/>
            <person name="Kim E."/>
            <person name="Tomasz A."/>
            <person name="Richardson P."/>
        </authorList>
    </citation>
    <scope>NUCLEOTIDE SEQUENCE [LARGE SCALE GENOMIC DNA]</scope>
    <source>
        <strain>JH9</strain>
    </source>
</reference>
<dbReference type="EMBL" id="CP000703">
    <property type="protein sequence ID" value="ABQ48420.1"/>
    <property type="molecule type" value="Genomic_DNA"/>
</dbReference>
<dbReference type="RefSeq" id="WP_000798967.1">
    <property type="nucleotide sequence ID" value="NC_009487.1"/>
</dbReference>
<dbReference type="SMR" id="A5IQE7"/>
<dbReference type="KEGG" id="saj:SaurJH9_0616"/>
<dbReference type="HOGENOM" id="CLU_2156795_0_0_9"/>
<dbReference type="HAMAP" id="MF_01863">
    <property type="entry name" value="UPF0741"/>
    <property type="match status" value="1"/>
</dbReference>
<dbReference type="InterPro" id="IPR009910">
    <property type="entry name" value="DUF1450"/>
</dbReference>
<dbReference type="InterPro" id="IPR020880">
    <property type="entry name" value="UPF0741"/>
</dbReference>
<dbReference type="Pfam" id="PF07293">
    <property type="entry name" value="DUF1450"/>
    <property type="match status" value="1"/>
</dbReference>
<gene>
    <name type="ordered locus">SaurJH9_0616</name>
</gene>